<gene>
    <name type="primary">Nefl</name>
    <name type="synonym">Nf68</name>
    <name type="synonym">Nfl</name>
</gene>
<proteinExistence type="evidence at protein level"/>
<dbReference type="EMBL" id="AF031880">
    <property type="protein sequence ID" value="AAB87069.1"/>
    <property type="molecule type" value="mRNA"/>
</dbReference>
<dbReference type="EMBL" id="M25638">
    <property type="protein sequence ID" value="AAA41694.1"/>
    <property type="molecule type" value="mRNA"/>
</dbReference>
<dbReference type="EMBL" id="X53981">
    <property type="protein sequence ID" value="CAA37931.1"/>
    <property type="molecule type" value="Genomic_DNA"/>
</dbReference>
<dbReference type="PIR" id="A21762">
    <property type="entry name" value="A21762"/>
</dbReference>
<dbReference type="PIR" id="I60434">
    <property type="entry name" value="I60434"/>
</dbReference>
<dbReference type="RefSeq" id="NP_113971.1">
    <property type="nucleotide sequence ID" value="NM_031783.2"/>
</dbReference>
<dbReference type="SMR" id="P19527"/>
<dbReference type="BioGRID" id="249778">
    <property type="interactions" value="8"/>
</dbReference>
<dbReference type="DIP" id="DIP-1N"/>
<dbReference type="FunCoup" id="P19527">
    <property type="interactions" value="489"/>
</dbReference>
<dbReference type="IntAct" id="P19527">
    <property type="interactions" value="3"/>
</dbReference>
<dbReference type="MINT" id="P19527"/>
<dbReference type="STRING" id="10116.ENSRNOP00000018599"/>
<dbReference type="GlyConnect" id="431">
    <property type="glycosylation" value="1 O-GlcNAc glycan (2 sites)"/>
</dbReference>
<dbReference type="GlyCosmos" id="P19527">
    <property type="glycosylation" value="2 sites, 1 glycan"/>
</dbReference>
<dbReference type="GlyGen" id="P19527">
    <property type="glycosylation" value="4 sites, 1 O-linked glycan (4 sites)"/>
</dbReference>
<dbReference type="iPTMnet" id="P19527"/>
<dbReference type="PhosphoSitePlus" id="P19527"/>
<dbReference type="SwissPalm" id="P19527"/>
<dbReference type="jPOST" id="P19527"/>
<dbReference type="PaxDb" id="10116-ENSRNOP00000018599"/>
<dbReference type="Ensembl" id="ENSRNOT00000018599.4">
    <property type="protein sequence ID" value="ENSRNOP00000018599.1"/>
    <property type="gene ID" value="ENSRNOG00000013658.4"/>
</dbReference>
<dbReference type="GeneID" id="83613"/>
<dbReference type="KEGG" id="rno:83613"/>
<dbReference type="UCSC" id="RGD:621458">
    <property type="organism name" value="rat"/>
</dbReference>
<dbReference type="AGR" id="RGD:621458"/>
<dbReference type="CTD" id="4747"/>
<dbReference type="RGD" id="621458">
    <property type="gene designation" value="Nefl"/>
</dbReference>
<dbReference type="eggNOG" id="ENOG502QSXY">
    <property type="taxonomic scope" value="Eukaryota"/>
</dbReference>
<dbReference type="GeneTree" id="ENSGT00940000156208"/>
<dbReference type="HOGENOM" id="CLU_012560_7_3_1"/>
<dbReference type="InParanoid" id="P19527"/>
<dbReference type="OMA" id="YKRRYME"/>
<dbReference type="OrthoDB" id="2441647at2759"/>
<dbReference type="PhylomeDB" id="P19527"/>
<dbReference type="TreeFam" id="TF330122"/>
<dbReference type="Reactome" id="R-RNO-438066">
    <property type="pathway name" value="Unblocking of NMDA receptors, glutamate binding and activation"/>
</dbReference>
<dbReference type="Reactome" id="R-RNO-5673001">
    <property type="pathway name" value="RAF/MAP kinase cascade"/>
</dbReference>
<dbReference type="PRO" id="PR:P19527"/>
<dbReference type="Proteomes" id="UP000002494">
    <property type="component" value="Chromosome 15"/>
</dbReference>
<dbReference type="Bgee" id="ENSRNOG00000013658">
    <property type="expression patterns" value="Expressed in Ammon's horn and 8 other cell types or tissues"/>
</dbReference>
<dbReference type="GO" id="GO:0030424">
    <property type="term" value="C:axon"/>
    <property type="evidence" value="ECO:0000314"/>
    <property type="project" value="RGD"/>
</dbReference>
<dbReference type="GO" id="GO:1904115">
    <property type="term" value="C:axon cytoplasm"/>
    <property type="evidence" value="ECO:0007669"/>
    <property type="project" value="GOC"/>
</dbReference>
<dbReference type="GO" id="GO:0098981">
    <property type="term" value="C:cholinergic synapse"/>
    <property type="evidence" value="ECO:0000266"/>
    <property type="project" value="RGD"/>
</dbReference>
<dbReference type="GO" id="GO:0005737">
    <property type="term" value="C:cytoplasm"/>
    <property type="evidence" value="ECO:0000266"/>
    <property type="project" value="RGD"/>
</dbReference>
<dbReference type="GO" id="GO:0005829">
    <property type="term" value="C:cytosol"/>
    <property type="evidence" value="ECO:0000304"/>
    <property type="project" value="Reactome"/>
</dbReference>
<dbReference type="GO" id="GO:0030426">
    <property type="term" value="C:growth cone"/>
    <property type="evidence" value="ECO:0000314"/>
    <property type="project" value="RGD"/>
</dbReference>
<dbReference type="GO" id="GO:0005882">
    <property type="term" value="C:intermediate filament"/>
    <property type="evidence" value="ECO:0000266"/>
    <property type="project" value="RGD"/>
</dbReference>
<dbReference type="GO" id="GO:0005883">
    <property type="term" value="C:neurofilament"/>
    <property type="evidence" value="ECO:0000314"/>
    <property type="project" value="RGD"/>
</dbReference>
<dbReference type="GO" id="GO:0031594">
    <property type="term" value="C:neuromuscular junction"/>
    <property type="evidence" value="ECO:0000266"/>
    <property type="project" value="RGD"/>
</dbReference>
<dbReference type="GO" id="GO:0043005">
    <property type="term" value="C:neuron projection"/>
    <property type="evidence" value="ECO:0000266"/>
    <property type="project" value="RGD"/>
</dbReference>
<dbReference type="GO" id="GO:0099160">
    <property type="term" value="C:postsynaptic intermediate filament cytoskeleton"/>
    <property type="evidence" value="ECO:0000266"/>
    <property type="project" value="RGD"/>
</dbReference>
<dbReference type="GO" id="GO:0099182">
    <property type="term" value="C:presynaptic intermediate filament cytoskeleton"/>
    <property type="evidence" value="ECO:0000266"/>
    <property type="project" value="RGD"/>
</dbReference>
<dbReference type="GO" id="GO:0098685">
    <property type="term" value="C:Schaffer collateral - CA1 synapse"/>
    <property type="evidence" value="ECO:0000266"/>
    <property type="project" value="RGD"/>
</dbReference>
<dbReference type="GO" id="GO:0042802">
    <property type="term" value="F:identical protein binding"/>
    <property type="evidence" value="ECO:0000266"/>
    <property type="project" value="RGD"/>
</dbReference>
<dbReference type="GO" id="GO:0043274">
    <property type="term" value="F:phospholipase binding"/>
    <property type="evidence" value="ECO:0000353"/>
    <property type="project" value="RGD"/>
</dbReference>
<dbReference type="GO" id="GO:0019904">
    <property type="term" value="F:protein domain specific binding"/>
    <property type="evidence" value="ECO:0000353"/>
    <property type="project" value="RGD"/>
</dbReference>
<dbReference type="GO" id="GO:0044877">
    <property type="term" value="F:protein-containing complex binding"/>
    <property type="evidence" value="ECO:0000314"/>
    <property type="project" value="RGD"/>
</dbReference>
<dbReference type="GO" id="GO:0030674">
    <property type="term" value="F:protein-macromolecule adaptor activity"/>
    <property type="evidence" value="ECO:0000266"/>
    <property type="project" value="RGD"/>
</dbReference>
<dbReference type="GO" id="GO:0005200">
    <property type="term" value="F:structural constituent of cytoskeleton"/>
    <property type="evidence" value="ECO:0000266"/>
    <property type="project" value="RGD"/>
</dbReference>
<dbReference type="GO" id="GO:0099184">
    <property type="term" value="F:structural constituent of postsynaptic intermediate filament cytoskeleton"/>
    <property type="evidence" value="ECO:0000266"/>
    <property type="project" value="RGD"/>
</dbReference>
<dbReference type="GO" id="GO:0015631">
    <property type="term" value="F:tubulin binding"/>
    <property type="evidence" value="ECO:0000266"/>
    <property type="project" value="RGD"/>
</dbReference>
<dbReference type="GO" id="GO:0008089">
    <property type="term" value="P:anterograde axonal transport"/>
    <property type="evidence" value="ECO:0000266"/>
    <property type="project" value="RGD"/>
</dbReference>
<dbReference type="GO" id="GO:0019896">
    <property type="term" value="P:axonal transport of mitochondrion"/>
    <property type="evidence" value="ECO:0000266"/>
    <property type="project" value="RGD"/>
</dbReference>
<dbReference type="GO" id="GO:0007409">
    <property type="term" value="P:axonogenesis"/>
    <property type="evidence" value="ECO:0000266"/>
    <property type="project" value="RGD"/>
</dbReference>
<dbReference type="GO" id="GO:0021987">
    <property type="term" value="P:cerebral cortex development"/>
    <property type="evidence" value="ECO:0000270"/>
    <property type="project" value="RGD"/>
</dbReference>
<dbReference type="GO" id="GO:0021766">
    <property type="term" value="P:hippocampus development"/>
    <property type="evidence" value="ECO:0000270"/>
    <property type="project" value="RGD"/>
</dbReference>
<dbReference type="GO" id="GO:0045110">
    <property type="term" value="P:intermediate filament bundle assembly"/>
    <property type="evidence" value="ECO:0000266"/>
    <property type="project" value="RGD"/>
</dbReference>
<dbReference type="GO" id="GO:0045109">
    <property type="term" value="P:intermediate filament organization"/>
    <property type="evidence" value="ECO:0000266"/>
    <property type="project" value="RGD"/>
</dbReference>
<dbReference type="GO" id="GO:0045105">
    <property type="term" value="P:intermediate filament polymerization or depolymerization"/>
    <property type="evidence" value="ECO:0000314"/>
    <property type="project" value="RGD"/>
</dbReference>
<dbReference type="GO" id="GO:0040011">
    <property type="term" value="P:locomotion"/>
    <property type="evidence" value="ECO:0000266"/>
    <property type="project" value="RGD"/>
</dbReference>
<dbReference type="GO" id="GO:0000226">
    <property type="term" value="P:microtubule cytoskeleton organization"/>
    <property type="evidence" value="ECO:0000266"/>
    <property type="project" value="RGD"/>
</dbReference>
<dbReference type="GO" id="GO:0097049">
    <property type="term" value="P:motor neuron apoptotic process"/>
    <property type="evidence" value="ECO:0000266"/>
    <property type="project" value="RGD"/>
</dbReference>
<dbReference type="GO" id="GO:2000672">
    <property type="term" value="P:negative regulation of motor neuron apoptotic process"/>
    <property type="evidence" value="ECO:0000266"/>
    <property type="project" value="RGD"/>
</dbReference>
<dbReference type="GO" id="GO:0033693">
    <property type="term" value="P:neurofilament bundle assembly"/>
    <property type="evidence" value="ECO:0000314"/>
    <property type="project" value="RGD"/>
</dbReference>
<dbReference type="GO" id="GO:0060052">
    <property type="term" value="P:neurofilament cytoskeleton organization"/>
    <property type="evidence" value="ECO:0000266"/>
    <property type="project" value="RGD"/>
</dbReference>
<dbReference type="GO" id="GO:0050885">
    <property type="term" value="P:neuromuscular process controlling balance"/>
    <property type="evidence" value="ECO:0000266"/>
    <property type="project" value="RGD"/>
</dbReference>
<dbReference type="GO" id="GO:0048812">
    <property type="term" value="P:neuron projection morphogenesis"/>
    <property type="evidence" value="ECO:0000266"/>
    <property type="project" value="RGD"/>
</dbReference>
<dbReference type="GO" id="GO:0014012">
    <property type="term" value="P:peripheral nervous system axon regeneration"/>
    <property type="evidence" value="ECO:0000266"/>
    <property type="project" value="RGD"/>
</dbReference>
<dbReference type="GO" id="GO:0050772">
    <property type="term" value="P:positive regulation of axonogenesis"/>
    <property type="evidence" value="ECO:0000266"/>
    <property type="project" value="RGD"/>
</dbReference>
<dbReference type="GO" id="GO:0099170">
    <property type="term" value="P:postsynaptic modulation of chemical synaptic transmission"/>
    <property type="evidence" value="ECO:0000266"/>
    <property type="project" value="RGD"/>
</dbReference>
<dbReference type="GO" id="GO:0051258">
    <property type="term" value="P:protein polymerization"/>
    <property type="evidence" value="ECO:0000314"/>
    <property type="project" value="RGD"/>
</dbReference>
<dbReference type="GO" id="GO:0031133">
    <property type="term" value="P:regulation of axon diameter"/>
    <property type="evidence" value="ECO:0000266"/>
    <property type="project" value="RGD"/>
</dbReference>
<dbReference type="GO" id="GO:0090128">
    <property type="term" value="P:regulation of synapse maturation"/>
    <property type="evidence" value="ECO:0000266"/>
    <property type="project" value="RGD"/>
</dbReference>
<dbReference type="GO" id="GO:1903937">
    <property type="term" value="P:response to acrylamide"/>
    <property type="evidence" value="ECO:0000270"/>
    <property type="project" value="RGD"/>
</dbReference>
<dbReference type="GO" id="GO:0051412">
    <property type="term" value="P:response to corticosterone"/>
    <property type="evidence" value="ECO:0000270"/>
    <property type="project" value="RGD"/>
</dbReference>
<dbReference type="GO" id="GO:0043434">
    <property type="term" value="P:response to peptide hormone"/>
    <property type="evidence" value="ECO:0000270"/>
    <property type="project" value="RGD"/>
</dbReference>
<dbReference type="GO" id="GO:1903935">
    <property type="term" value="P:response to sodium arsenite"/>
    <property type="evidence" value="ECO:0000314"/>
    <property type="project" value="RGD"/>
</dbReference>
<dbReference type="GO" id="GO:0009636">
    <property type="term" value="P:response to toxic substance"/>
    <property type="evidence" value="ECO:0000270"/>
    <property type="project" value="RGD"/>
</dbReference>
<dbReference type="GO" id="GO:0008090">
    <property type="term" value="P:retrograde axonal transport"/>
    <property type="evidence" value="ECO:0000266"/>
    <property type="project" value="RGD"/>
</dbReference>
<dbReference type="GO" id="GO:0021510">
    <property type="term" value="P:spinal cord development"/>
    <property type="evidence" value="ECO:0000270"/>
    <property type="project" value="RGD"/>
</dbReference>
<dbReference type="FunFam" id="1.20.5.1160:FF:000001">
    <property type="entry name" value="Keratin type II"/>
    <property type="match status" value="1"/>
</dbReference>
<dbReference type="FunFam" id="1.20.5.170:FF:000002">
    <property type="entry name" value="Type I keratin KA11"/>
    <property type="match status" value="1"/>
</dbReference>
<dbReference type="FunFam" id="1.20.5.500:FF:000001">
    <property type="entry name" value="Type II keratin 23"/>
    <property type="match status" value="1"/>
</dbReference>
<dbReference type="Gene3D" id="1.20.5.170">
    <property type="match status" value="1"/>
</dbReference>
<dbReference type="Gene3D" id="1.20.5.500">
    <property type="entry name" value="Single helix bin"/>
    <property type="match status" value="1"/>
</dbReference>
<dbReference type="Gene3D" id="1.20.5.1160">
    <property type="entry name" value="Vasodilator-stimulated phosphoprotein"/>
    <property type="match status" value="1"/>
</dbReference>
<dbReference type="InterPro" id="IPR018039">
    <property type="entry name" value="IF_conserved"/>
</dbReference>
<dbReference type="InterPro" id="IPR039008">
    <property type="entry name" value="IF_rod_dom"/>
</dbReference>
<dbReference type="InterPro" id="IPR006821">
    <property type="entry name" value="Intermed_filament_DNA-bd"/>
</dbReference>
<dbReference type="InterPro" id="IPR050405">
    <property type="entry name" value="Intermediate_filament"/>
</dbReference>
<dbReference type="PANTHER" id="PTHR45652">
    <property type="entry name" value="GLIAL FIBRILLARY ACIDIC PROTEIN"/>
    <property type="match status" value="1"/>
</dbReference>
<dbReference type="PANTHER" id="PTHR45652:SF8">
    <property type="entry name" value="NEUROFILAMENT LIGHT POLYPEPTIDE"/>
    <property type="match status" value="1"/>
</dbReference>
<dbReference type="Pfam" id="PF00038">
    <property type="entry name" value="Filament"/>
    <property type="match status" value="1"/>
</dbReference>
<dbReference type="Pfam" id="PF04732">
    <property type="entry name" value="Filament_head"/>
    <property type="match status" value="1"/>
</dbReference>
<dbReference type="SMART" id="SM01391">
    <property type="entry name" value="Filament"/>
    <property type="match status" value="1"/>
</dbReference>
<dbReference type="SUPFAM" id="SSF64593">
    <property type="entry name" value="Intermediate filament protein, coiled coil region"/>
    <property type="match status" value="2"/>
</dbReference>
<dbReference type="PROSITE" id="PS00226">
    <property type="entry name" value="IF_ROD_1"/>
    <property type="match status" value="1"/>
</dbReference>
<dbReference type="PROSITE" id="PS51842">
    <property type="entry name" value="IF_ROD_2"/>
    <property type="match status" value="1"/>
</dbReference>
<organism>
    <name type="scientific">Rattus norvegicus</name>
    <name type="common">Rat</name>
    <dbReference type="NCBI Taxonomy" id="10116"/>
    <lineage>
        <taxon>Eukaryota</taxon>
        <taxon>Metazoa</taxon>
        <taxon>Chordata</taxon>
        <taxon>Craniata</taxon>
        <taxon>Vertebrata</taxon>
        <taxon>Euteleostomi</taxon>
        <taxon>Mammalia</taxon>
        <taxon>Eutheria</taxon>
        <taxon>Euarchontoglires</taxon>
        <taxon>Glires</taxon>
        <taxon>Rodentia</taxon>
        <taxon>Myomorpha</taxon>
        <taxon>Muroidea</taxon>
        <taxon>Muridae</taxon>
        <taxon>Murinae</taxon>
        <taxon>Rattus</taxon>
    </lineage>
</organism>
<sequence>MSSFSYEPYFSTSYKRRYVETPRVHISSVRSGYSTARSAYSSYSAPVSSSLSVRRSYSSSSGSLMPSLENLDLSQVAAISNDLKSIRTQEKAQLQDLNDRFASFIERVHELEQQNKVLEAELLVLRQKHSEPSRFRALYEQEIRDLRLAAEDATNEKQALQGEREGLEETLRNLQARYEEEVLSREDAEGRLMEARKGADEAALARAELEKRIDSLMDEIAFLKKVHEEEIAELQAQIQYAQISVEMDVSSKPDLSAALKDIRAQYEKLAAKNMQNAEEWFKSRFTVLTESAAKNTDAVRAAKDEVSESRRLLKAKTLEIEACRGMNEALEKQLQELEDKQNADISAMQDTINKLENELRSTKSEMARYLKEYQDLLNVKMALDIEIAAYRKLLEGEETRLSFTSVGSITSGYSQSSQVFGRSAYSGLQSSSYLMSARAFPAYYTSHVQEEQSEVEETIEATKAEEAKDEPPSEGEAEEEEKEKEEGEEEEGAEEEEAAKDESEDAKEEEGGEGEEEDTKESEEEEKKEESAGEEQAAKKKD</sequence>
<protein>
    <recommendedName>
        <fullName>Neurofilament light polypeptide</fullName>
        <shortName>NF-L</shortName>
    </recommendedName>
    <alternativeName>
        <fullName>68 kDa neurofilament protein</fullName>
    </alternativeName>
    <alternativeName>
        <fullName>Neurofilament triplet L protein</fullName>
    </alternativeName>
</protein>
<accession>P19527</accession>
<accession>Q63367</accession>
<reference key="1">
    <citation type="journal article" date="1989" name="Eur. J. Cell Biol.">
        <title>Expression of rat neurofilament proteins NF-L and NF-M in transfected non-neuronal cells.</title>
        <authorList>
            <person name="Chin S.S."/>
            <person name="Liem R.K.H."/>
        </authorList>
    </citation>
    <scope>NUCLEOTIDE SEQUENCE [MRNA]</scope>
</reference>
<reference key="2">
    <citation type="journal article" date="1985" name="Biochim. Biophys. Acta">
        <title>Cloning of a cDNA encoding the smallest neurofilament protein from the rat.</title>
        <authorList>
            <person name="Julien J.-P."/>
            <person name="Ramachandran K."/>
            <person name="Grosveld F."/>
        </authorList>
    </citation>
    <scope>NUCLEOTIDE SEQUENCE [MRNA] OF 198-484</scope>
</reference>
<reference key="3">
    <citation type="journal article" date="1995" name="J. Neurosci. Res.">
        <title>Characterization of the rat light neurofilament (NF-L) gene promoter and identification of NGF and cAMP responsive regions.</title>
        <authorList>
            <person name="Reeben M."/>
            <person name="Neuman T."/>
            <person name="Palgi J."/>
            <person name="Palm K."/>
            <person name="Paalme V."/>
            <person name="Saarma M."/>
        </authorList>
    </citation>
    <scope>NUCLEOTIDE SEQUENCE [GENOMIC DNA] OF 1-11</scope>
</reference>
<reference key="4">
    <citation type="submission" date="2007-07" db="UniProtKB">
        <authorList>
            <person name="Lubec G."/>
            <person name="Pradeep J.J.P."/>
            <person name="Afjehi-Sadat L."/>
            <person name="Diao W."/>
            <person name="Kang S.U."/>
        </authorList>
    </citation>
    <scope>PROTEIN SEQUENCE OF 2-14; 38-54; 56-84; 92-107; 117-126; 148-157; 165-172; 212-224; 273-282; 285-294; 368-379; 381-391; 393-422 AND 439-463</scope>
    <scope>ACETYLATION AT SER-2</scope>
    <scope>IDENTIFICATION BY MASS SPECTROMETRY</scope>
    <source>
        <strain>Sprague-Dawley</strain>
        <tissue>Brain</tissue>
        <tissue>Hippocampus</tissue>
        <tissue>Spinal cord</tissue>
    </source>
</reference>
<reference key="5">
    <citation type="journal article" date="1993" name="J. Biol. Chem.">
        <title>Glycosylation of mammalian neurofilaments. Localization of multiple O-linked N-acetylglucosamine moieties on neurofilament polypeptides L and M.</title>
        <authorList>
            <person name="Dong D.L.-Y."/>
            <person name="Xu Z.-S."/>
            <person name="Chevrier M.R."/>
            <person name="Cotter R.J."/>
            <person name="Cleveland D.W."/>
            <person name="Hart G.W."/>
        </authorList>
    </citation>
    <scope>GLYCOSYLATION AT THR-21 AND SER-27</scope>
</reference>
<reference key="6">
    <citation type="journal article" date="1997" name="J. Biol. Chem.">
        <title>Heterodimeric associations between neuronal intermediate filament proteins.</title>
        <authorList>
            <person name="Athlan E.S."/>
            <person name="Mushynski W.E."/>
        </authorList>
    </citation>
    <scope>SUBUNIT</scope>
    <scope>INTERACTION WITH NEFH; NEFM AND INA</scope>
    <scope>TISSUE SPECIFICITY</scope>
</reference>
<reference key="7">
    <citation type="submission" date="2007-02" db="UniProtKB">
        <authorList>
            <person name="Lubec G."/>
            <person name="Chen W.-Q."/>
        </authorList>
    </citation>
    <scope>ACETYLATION AT SER-2</scope>
    <scope>IDENTIFICATION BY MASS SPECTROMETRY</scope>
</reference>
<reference key="8">
    <citation type="journal article" date="2012" name="Nat. Commun.">
        <title>Quantitative maps of protein phosphorylation sites across 14 different rat organs and tissues.</title>
        <authorList>
            <person name="Lundby A."/>
            <person name="Secher A."/>
            <person name="Lage K."/>
            <person name="Nordsborg N.B."/>
            <person name="Dmytriyev A."/>
            <person name="Lundby C."/>
            <person name="Olsen J.V."/>
        </authorList>
    </citation>
    <scope>PHOSPHORYLATION [LARGE SCALE ANALYSIS] AT SER-67; SER-103; SER-453; SER-473; SER-503; THR-519; SER-522 AND SER-531</scope>
    <scope>IDENTIFICATION BY MASS SPECTROMETRY [LARGE SCALE ANALYSIS]</scope>
</reference>
<name>NFL_RAT</name>
<comment type="function">
    <text evidence="3">Neurofilaments usually contain three intermediate filament proteins: NEFL, NEFM, and NEFH which are involved in the maintenance of neuronal caliber. May additionally cooperate with the neuronal intermediate filament proteins PRPH and INA to form neuronal filamentous networks (By similarity).</text>
</comment>
<comment type="subunit">
    <text evidence="1 7">Forms homodimers (in vitro) (PubMed:9388258). Forms heterodimers with NEFH or NEFM; which can further hetero-oligomerize (in vitro) (PubMed:9388258). Forms heterodimers with INA (in vitro) (PubMed:9388258). Interacts with ARHGEF28. Interacts with TRIM2.</text>
</comment>
<comment type="subcellular location">
    <subcellularLocation>
        <location evidence="3">Cell projection</location>
        <location evidence="3">Axon</location>
    </subcellularLocation>
    <subcellularLocation>
        <location evidence="3">Cytoplasm</location>
        <location evidence="3">Cytoskeleton</location>
    </subcellularLocation>
</comment>
<comment type="tissue specificity">
    <text evidence="7">Expressed in the dorsal root ganglion neurons (at protein level).</text>
</comment>
<comment type="domain">
    <text>The extra mass and high charge density that distinguish the neurofilament proteins from all other intermediate filament proteins are due to the tailpiece extensions. This region may form a charged scaffolding structure suitable for interaction with other neuronal components or ions.</text>
</comment>
<comment type="PTM">
    <text evidence="6">O-glycosylated; contains three N-acetylglucosamine side chains.</text>
</comment>
<comment type="PTM">
    <text evidence="1">Phosphorylated in the head and rod regions by the PKC kinase PKN1, leading to the inhibition of polymerization.</text>
</comment>
<comment type="PTM">
    <text evidence="1">Ubiquitinated in the presence of TRIM2 and UBE2D1.</text>
</comment>
<comment type="miscellaneous">
    <text>NF-L is the most abundant of the three neurofilament proteins and, like the other nonepithelial intermediate filament proteins, it can form homomeric 10-nm filaments.</text>
</comment>
<comment type="similarity">
    <text evidence="4">Belongs to the intermediate filament family.</text>
</comment>
<keyword id="KW-0007">Acetylation</keyword>
<keyword id="KW-0966">Cell projection</keyword>
<keyword id="KW-0175">Coiled coil</keyword>
<keyword id="KW-0963">Cytoplasm</keyword>
<keyword id="KW-0206">Cytoskeleton</keyword>
<keyword id="KW-0903">Direct protein sequencing</keyword>
<keyword id="KW-0325">Glycoprotein</keyword>
<keyword id="KW-0403">Intermediate filament</keyword>
<keyword id="KW-0488">Methylation</keyword>
<keyword id="KW-0597">Phosphoprotein</keyword>
<keyword id="KW-1185">Reference proteome</keyword>
<keyword id="KW-0832">Ubl conjugation</keyword>
<feature type="initiator methionine" description="Removed" evidence="8 9">
    <location>
        <position position="1"/>
    </location>
</feature>
<feature type="chain" id="PRO_0000063790" description="Neurofilament light polypeptide">
    <location>
        <begin position="2"/>
        <end position="542"/>
    </location>
</feature>
<feature type="domain" description="IF rod" evidence="4">
    <location>
        <begin position="90"/>
        <end position="401"/>
    </location>
</feature>
<feature type="region of interest" description="Head">
    <location>
        <begin position="2"/>
        <end position="93"/>
    </location>
</feature>
<feature type="region of interest" description="Coil 1A">
    <location>
        <begin position="94"/>
        <end position="125"/>
    </location>
</feature>
<feature type="region of interest" description="Linker 1">
    <location>
        <begin position="126"/>
        <end position="138"/>
    </location>
</feature>
<feature type="region of interest" description="Coil 1B">
    <location>
        <begin position="139"/>
        <end position="234"/>
    </location>
</feature>
<feature type="region of interest" description="Linker 12">
    <location>
        <begin position="235"/>
        <end position="253"/>
    </location>
</feature>
<feature type="region of interest" description="Coil 2A">
    <location>
        <begin position="254"/>
        <end position="272"/>
    </location>
</feature>
<feature type="region of interest" description="Linker 2">
    <location>
        <begin position="273"/>
        <end position="281"/>
    </location>
</feature>
<feature type="region of interest" description="Coil 2B">
    <location>
        <begin position="282"/>
        <end position="397"/>
    </location>
</feature>
<feature type="region of interest" description="Epitope; recognized by IF-specific monoclonal antibody">
    <location>
        <begin position="382"/>
        <end position="392"/>
    </location>
</feature>
<feature type="region of interest" description="Tail">
    <location>
        <begin position="398"/>
        <end position="542"/>
    </location>
</feature>
<feature type="region of interest" description="Tail, subdomain A">
    <location>
        <begin position="398"/>
        <end position="444"/>
    </location>
</feature>
<feature type="region of interest" description="Tail, subdomain B (acidic)">
    <location>
        <begin position="445"/>
        <end position="542"/>
    </location>
</feature>
<feature type="region of interest" description="Disordered" evidence="5">
    <location>
        <begin position="451"/>
        <end position="542"/>
    </location>
</feature>
<feature type="compositionally biased region" description="Basic and acidic residues" evidence="5">
    <location>
        <begin position="460"/>
        <end position="471"/>
    </location>
</feature>
<feature type="compositionally biased region" description="Acidic residues" evidence="5">
    <location>
        <begin position="472"/>
        <end position="527"/>
    </location>
</feature>
<feature type="compositionally biased region" description="Basic and acidic residues" evidence="5">
    <location>
        <begin position="528"/>
        <end position="542"/>
    </location>
</feature>
<feature type="modified residue" description="N-acetylserine" evidence="8 9">
    <location>
        <position position="2"/>
    </location>
</feature>
<feature type="modified residue" description="Asymmetric dimethylarginine; alternate" evidence="3">
    <location>
        <position position="23"/>
    </location>
</feature>
<feature type="modified residue" description="Omega-N-methylarginine; alternate" evidence="3">
    <location>
        <position position="23"/>
    </location>
</feature>
<feature type="modified residue" description="Omega-N-methylarginine" evidence="3">
    <location>
        <position position="30"/>
    </location>
</feature>
<feature type="modified residue" description="Phosphotyrosine" evidence="3">
    <location>
        <position position="43"/>
    </location>
</feature>
<feature type="modified residue" description="Phosphoserine" evidence="2">
    <location>
        <position position="56"/>
    </location>
</feature>
<feature type="modified residue" description="Phosphoserine" evidence="11">
    <location>
        <position position="67"/>
    </location>
</feature>
<feature type="modified residue" description="Phosphoserine" evidence="11">
    <location>
        <position position="103"/>
    </location>
</feature>
<feature type="modified residue" description="Phosphoserine" evidence="11">
    <location>
        <position position="453"/>
    </location>
</feature>
<feature type="modified residue" description="Phosphoserine" evidence="11">
    <location>
        <position position="473"/>
    </location>
</feature>
<feature type="modified residue" description="Phosphoserine" evidence="11">
    <location>
        <position position="503"/>
    </location>
</feature>
<feature type="modified residue" description="Phosphothreonine" evidence="11">
    <location>
        <position position="519"/>
    </location>
</feature>
<feature type="modified residue" description="Phosphoserine" evidence="11">
    <location>
        <position position="522"/>
    </location>
</feature>
<feature type="modified residue" description="Phosphoserine" evidence="11">
    <location>
        <position position="531"/>
    </location>
</feature>
<feature type="glycosylation site" id="CAR_000128" description="O-linked (GlcNAc) threonine" evidence="6">
    <location>
        <position position="21"/>
    </location>
</feature>
<feature type="glycosylation site" id="CAR_000129" description="O-linked (GlcNAc) serine" evidence="6">
    <location>
        <position position="27"/>
    </location>
</feature>
<feature type="sequence conflict" description="In Ref. 2; AAA41694." evidence="10" ref="2">
    <original>GADEAA</original>
    <variation>KARMSS</variation>
    <location>
        <begin position="198"/>
        <end position="203"/>
    </location>
</feature>
<feature type="sequence conflict" description="In Ref. 2; AAA41694." evidence="10" ref="2">
    <original>R</original>
    <variation>K</variation>
    <location>
        <position position="400"/>
    </location>
</feature>
<feature type="sequence conflict" description="In Ref. 2; AAA41694." evidence="10" ref="2">
    <original>A</original>
    <variation>E</variation>
    <location>
        <position position="477"/>
    </location>
</feature>
<feature type="sequence conflict" description="In Ref. 2; AAA41694." evidence="10" ref="2">
    <original>EKEK</original>
    <variation>KKDE</variation>
    <location>
        <begin position="481"/>
        <end position="484"/>
    </location>
</feature>
<evidence type="ECO:0000250" key="1"/>
<evidence type="ECO:0000250" key="2">
    <source>
        <dbReference type="UniProtKB" id="P02548"/>
    </source>
</evidence>
<evidence type="ECO:0000250" key="3">
    <source>
        <dbReference type="UniProtKB" id="P08551"/>
    </source>
</evidence>
<evidence type="ECO:0000255" key="4">
    <source>
        <dbReference type="PROSITE-ProRule" id="PRU01188"/>
    </source>
</evidence>
<evidence type="ECO:0000256" key="5">
    <source>
        <dbReference type="SAM" id="MobiDB-lite"/>
    </source>
</evidence>
<evidence type="ECO:0000269" key="6">
    <source>
    </source>
</evidence>
<evidence type="ECO:0000269" key="7">
    <source>
    </source>
</evidence>
<evidence type="ECO:0000269" key="8">
    <source ref="4"/>
</evidence>
<evidence type="ECO:0000269" key="9">
    <source ref="7"/>
</evidence>
<evidence type="ECO:0000305" key="10"/>
<evidence type="ECO:0007744" key="11">
    <source>
    </source>
</evidence>